<reference key="1">
    <citation type="journal article" date="2003" name="Nature">
        <title>Genome sequence of Bacillus cereus and comparative analysis with Bacillus anthracis.</title>
        <authorList>
            <person name="Ivanova N."/>
            <person name="Sorokin A."/>
            <person name="Anderson I."/>
            <person name="Galleron N."/>
            <person name="Candelon B."/>
            <person name="Kapatral V."/>
            <person name="Bhattacharyya A."/>
            <person name="Reznik G."/>
            <person name="Mikhailova N."/>
            <person name="Lapidus A."/>
            <person name="Chu L."/>
            <person name="Mazur M."/>
            <person name="Goltsman E."/>
            <person name="Larsen N."/>
            <person name="D'Souza M."/>
            <person name="Walunas T."/>
            <person name="Grechkin Y."/>
            <person name="Pusch G."/>
            <person name="Haselkorn R."/>
            <person name="Fonstein M."/>
            <person name="Ehrlich S.D."/>
            <person name="Overbeek R."/>
            <person name="Kyrpides N.C."/>
        </authorList>
    </citation>
    <scope>NUCLEOTIDE SEQUENCE [LARGE SCALE GENOMIC DNA]</scope>
    <source>
        <strain>ATCC 14579 / DSM 31 / CCUG 7414 / JCM 2152 / NBRC 15305 / NCIMB 9373 / NCTC 2599 / NRRL B-3711</strain>
    </source>
</reference>
<comment type="similarity">
    <text evidence="1">Belongs to the UPF0398 family.</text>
</comment>
<gene>
    <name type="ordered locus">BC_1561</name>
</gene>
<organism>
    <name type="scientific">Bacillus cereus (strain ATCC 14579 / DSM 31 / CCUG 7414 / JCM 2152 / NBRC 15305 / NCIMB 9373 / NCTC 2599 / NRRL B-3711)</name>
    <dbReference type="NCBI Taxonomy" id="226900"/>
    <lineage>
        <taxon>Bacteria</taxon>
        <taxon>Bacillati</taxon>
        <taxon>Bacillota</taxon>
        <taxon>Bacilli</taxon>
        <taxon>Bacillales</taxon>
        <taxon>Bacillaceae</taxon>
        <taxon>Bacillus</taxon>
        <taxon>Bacillus cereus group</taxon>
    </lineage>
</organism>
<sequence>MKVIAVTGYKPFELGIFKNDHPGVECIKKALHRKLITFVEDGLEWVIISGQLGVELWAAEVVFEMQVEYPDLKLAVFTPFLEQEENWKEDNREYYEFILSQADHVDSITKRKYESPEQFKLKNQFFIEKSDALLAVYDEEKPGSPKYIVESAKKKGEIENYHSYFILFSDLQDIIEEEQWNNAE</sequence>
<protein>
    <recommendedName>
        <fullName evidence="1">UPF0398 protein BC_1561</fullName>
    </recommendedName>
</protein>
<name>Y1561_BACCR</name>
<proteinExistence type="inferred from homology"/>
<evidence type="ECO:0000255" key="1">
    <source>
        <dbReference type="HAMAP-Rule" id="MF_01575"/>
    </source>
</evidence>
<keyword id="KW-1185">Reference proteome</keyword>
<accession>Q813S8</accession>
<feature type="chain" id="PRO_0000267150" description="UPF0398 protein BC_1561">
    <location>
        <begin position="1"/>
        <end position="184"/>
    </location>
</feature>
<dbReference type="EMBL" id="AE016877">
    <property type="protein sequence ID" value="AAP08540.1"/>
    <property type="molecule type" value="Genomic_DNA"/>
</dbReference>
<dbReference type="RefSeq" id="NP_831339.1">
    <property type="nucleotide sequence ID" value="NC_004722.1"/>
</dbReference>
<dbReference type="RefSeq" id="WP_000862908.1">
    <property type="nucleotide sequence ID" value="NZ_CP138336.1"/>
</dbReference>
<dbReference type="SMR" id="Q813S8"/>
<dbReference type="STRING" id="226900.BC_1561"/>
<dbReference type="KEGG" id="bce:BC1561"/>
<dbReference type="PATRIC" id="fig|226900.8.peg.1539"/>
<dbReference type="HOGENOM" id="CLU_105319_0_0_9"/>
<dbReference type="OrthoDB" id="2301957at2"/>
<dbReference type="Proteomes" id="UP000001417">
    <property type="component" value="Chromosome"/>
</dbReference>
<dbReference type="Gene3D" id="3.40.50.450">
    <property type="match status" value="1"/>
</dbReference>
<dbReference type="HAMAP" id="MF_01575">
    <property type="entry name" value="UPF0398"/>
    <property type="match status" value="1"/>
</dbReference>
<dbReference type="InterPro" id="IPR010697">
    <property type="entry name" value="YspA"/>
</dbReference>
<dbReference type="NCBIfam" id="NF010181">
    <property type="entry name" value="PRK13660.1"/>
    <property type="match status" value="1"/>
</dbReference>
<dbReference type="PANTHER" id="PTHR38440:SF1">
    <property type="entry name" value="UPF0398 PROTEIN SPR0331"/>
    <property type="match status" value="1"/>
</dbReference>
<dbReference type="PANTHER" id="PTHR38440">
    <property type="entry name" value="UPF0398 PROTEIN YPSA"/>
    <property type="match status" value="1"/>
</dbReference>
<dbReference type="Pfam" id="PF06908">
    <property type="entry name" value="YpsA"/>
    <property type="match status" value="1"/>
</dbReference>
<dbReference type="PIRSF" id="PIRSF021290">
    <property type="entry name" value="DUF1273"/>
    <property type="match status" value="1"/>
</dbReference>
<dbReference type="SUPFAM" id="SSF102405">
    <property type="entry name" value="MCP/YpsA-like"/>
    <property type="match status" value="1"/>
</dbReference>